<keyword id="KW-0010">Activator</keyword>
<keyword id="KW-0963">Cytoplasm</keyword>
<keyword id="KW-0539">Nucleus</keyword>
<keyword id="KW-1185">Reference proteome</keyword>
<keyword id="KW-0678">Repressor</keyword>
<keyword id="KW-0943">RNA-mediated gene silencing</keyword>
<keyword id="KW-0804">Transcription</keyword>
<keyword id="KW-0805">Transcription regulation</keyword>
<keyword id="KW-0810">Translation regulation</keyword>
<proteinExistence type="evidence at transcript level"/>
<name>CNOT9_XENTR</name>
<accession>Q6P819</accession>
<evidence type="ECO:0000250" key="1">
    <source>
        <dbReference type="UniProtKB" id="Q92600"/>
    </source>
</evidence>
<evidence type="ECO:0000250" key="2">
    <source>
        <dbReference type="UniProtKB" id="Q9JKY0"/>
    </source>
</evidence>
<evidence type="ECO:0000305" key="3"/>
<gene>
    <name evidence="1" type="primary">cnot9</name>
    <name type="synonym">rcd1</name>
    <name type="synonym">rqcd1</name>
    <name type="ORF">TNeu111l17.1</name>
</gene>
<sequence length="299" mass="33557">MHSLATAAPVPAALAQVDREKIYQWINELSSPDTRENALLELSKKRESVPDLAPMLWHSFGTIAALLQEIVNIYPSINPPTLTAHQSNRVCNALALLQCVASHPETRSAFLAAHIPLFLYPFLHTVSKTRPFEYLRLTSLGVIGALVKTDEQEVINFLLTTEIIPLCLRIMESGSELSKTVATFILQKILLDDTGLAYICQTYERFSHVAMILGKMVLQLSKEPSARLLKHVVRCYLRLSDNPRAREALRQCLPDQLKDTTFAQVLKDDTTTKRWLAQLVKNLQEGQVTDPRGIPLPPQ</sequence>
<dbReference type="EMBL" id="CR760361">
    <property type="protein sequence ID" value="CAJ82430.1"/>
    <property type="molecule type" value="mRNA"/>
</dbReference>
<dbReference type="EMBL" id="BC061412">
    <property type="protein sequence ID" value="AAH61412.1"/>
    <property type="molecule type" value="mRNA"/>
</dbReference>
<dbReference type="RefSeq" id="NP_989024.1">
    <property type="nucleotide sequence ID" value="NM_203693.1"/>
</dbReference>
<dbReference type="SMR" id="Q6P819"/>
<dbReference type="FunCoup" id="Q6P819">
    <property type="interactions" value="2036"/>
</dbReference>
<dbReference type="STRING" id="8364.ENSXETP00000050002"/>
<dbReference type="PaxDb" id="8364-ENSXETP00000032762"/>
<dbReference type="DNASU" id="394620"/>
<dbReference type="GeneID" id="394620"/>
<dbReference type="KEGG" id="xtr:394620"/>
<dbReference type="AGR" id="Xenbase:XB-GENE-1001082"/>
<dbReference type="CTD" id="9125"/>
<dbReference type="eggNOG" id="KOG3036">
    <property type="taxonomic scope" value="Eukaryota"/>
</dbReference>
<dbReference type="HOGENOM" id="CLU_039962_2_0_1"/>
<dbReference type="InParanoid" id="Q6P819"/>
<dbReference type="OMA" id="EKVYTWI"/>
<dbReference type="OrthoDB" id="1183224at2759"/>
<dbReference type="PhylomeDB" id="Q6P819"/>
<dbReference type="TreeFam" id="TF105734"/>
<dbReference type="Reactome" id="R-XTR-429947">
    <property type="pathway name" value="Deadenylation of mRNA"/>
</dbReference>
<dbReference type="Reactome" id="R-XTR-6804115">
    <property type="pathway name" value="TP53 regulates transcription of additional cell cycle genes whose exact role in the p53 pathway remain uncertain"/>
</dbReference>
<dbReference type="Proteomes" id="UP000008143">
    <property type="component" value="Chromosome 9"/>
</dbReference>
<dbReference type="Bgee" id="ENSXETG00000014984">
    <property type="expression patterns" value="Expressed in skeletal muscle tissue and 13 other cell types or tissues"/>
</dbReference>
<dbReference type="GO" id="GO:0030014">
    <property type="term" value="C:CCR4-NOT complex"/>
    <property type="evidence" value="ECO:0000250"/>
    <property type="project" value="UniProtKB"/>
</dbReference>
<dbReference type="GO" id="GO:0005634">
    <property type="term" value="C:nucleus"/>
    <property type="evidence" value="ECO:0007669"/>
    <property type="project" value="UniProtKB-SubCell"/>
</dbReference>
<dbReference type="GO" id="GO:0000932">
    <property type="term" value="C:P-body"/>
    <property type="evidence" value="ECO:0007669"/>
    <property type="project" value="UniProtKB-SubCell"/>
</dbReference>
<dbReference type="GO" id="GO:0003713">
    <property type="term" value="F:transcription coactivator activity"/>
    <property type="evidence" value="ECO:0000250"/>
    <property type="project" value="UniProtKB"/>
</dbReference>
<dbReference type="GO" id="GO:0006402">
    <property type="term" value="P:mRNA catabolic process"/>
    <property type="evidence" value="ECO:0007669"/>
    <property type="project" value="InterPro"/>
</dbReference>
<dbReference type="GO" id="GO:0033147">
    <property type="term" value="P:negative regulation of intracellular estrogen receptor signaling pathway"/>
    <property type="evidence" value="ECO:0000250"/>
    <property type="project" value="UniProtKB"/>
</dbReference>
<dbReference type="GO" id="GO:0006417">
    <property type="term" value="P:regulation of translation"/>
    <property type="evidence" value="ECO:0007669"/>
    <property type="project" value="UniProtKB-KW"/>
</dbReference>
<dbReference type="GO" id="GO:0031047">
    <property type="term" value="P:regulatory ncRNA-mediated gene silencing"/>
    <property type="evidence" value="ECO:0007669"/>
    <property type="project" value="UniProtKB-KW"/>
</dbReference>
<dbReference type="FunFam" id="1.25.10.10:FF:000037">
    <property type="entry name" value="CCR4-NOT transcription complex subunit 9"/>
    <property type="match status" value="1"/>
</dbReference>
<dbReference type="Gene3D" id="1.25.10.10">
    <property type="entry name" value="Leucine-rich Repeat Variant"/>
    <property type="match status" value="1"/>
</dbReference>
<dbReference type="InterPro" id="IPR011989">
    <property type="entry name" value="ARM-like"/>
</dbReference>
<dbReference type="InterPro" id="IPR016024">
    <property type="entry name" value="ARM-type_fold"/>
</dbReference>
<dbReference type="InterPro" id="IPR007216">
    <property type="entry name" value="CNOT9"/>
</dbReference>
<dbReference type="PANTHER" id="PTHR12262">
    <property type="entry name" value="CCR4-NOT TRANSCRIPTION COMPLEX SUBUNIT 9"/>
    <property type="match status" value="1"/>
</dbReference>
<dbReference type="Pfam" id="PF04078">
    <property type="entry name" value="Rcd1"/>
    <property type="match status" value="1"/>
</dbReference>
<dbReference type="SUPFAM" id="SSF48371">
    <property type="entry name" value="ARM repeat"/>
    <property type="match status" value="1"/>
</dbReference>
<reference key="1">
    <citation type="submission" date="2006-10" db="EMBL/GenBank/DDBJ databases">
        <authorList>
            <consortium name="Sanger Xenopus tropicalis EST/cDNA project"/>
        </authorList>
    </citation>
    <scope>NUCLEOTIDE SEQUENCE [LARGE SCALE MRNA]</scope>
    <source>
        <tissue>Neurula</tissue>
    </source>
</reference>
<reference key="2">
    <citation type="submission" date="2003-11" db="EMBL/GenBank/DDBJ databases">
        <authorList>
            <consortium name="NIH - Xenopus Gene Collection (XGC) project"/>
        </authorList>
    </citation>
    <scope>NUCLEOTIDE SEQUENCE [LARGE SCALE MRNA]</scope>
    <source>
        <tissue>Embryo</tissue>
    </source>
</reference>
<feature type="chain" id="PRO_0000327232" description="CCR4-NOT transcription complex subunit 9">
    <location>
        <begin position="1"/>
        <end position="299"/>
    </location>
</feature>
<protein>
    <recommendedName>
        <fullName evidence="1">CCR4-NOT transcription complex subunit 9</fullName>
    </recommendedName>
    <alternativeName>
        <fullName>Cell differentiation protein RQCD1 homolog</fullName>
        <shortName>Rcd-1</shortName>
    </alternativeName>
</protein>
<organism>
    <name type="scientific">Xenopus tropicalis</name>
    <name type="common">Western clawed frog</name>
    <name type="synonym">Silurana tropicalis</name>
    <dbReference type="NCBI Taxonomy" id="8364"/>
    <lineage>
        <taxon>Eukaryota</taxon>
        <taxon>Metazoa</taxon>
        <taxon>Chordata</taxon>
        <taxon>Craniata</taxon>
        <taxon>Vertebrata</taxon>
        <taxon>Euteleostomi</taxon>
        <taxon>Amphibia</taxon>
        <taxon>Batrachia</taxon>
        <taxon>Anura</taxon>
        <taxon>Pipoidea</taxon>
        <taxon>Pipidae</taxon>
        <taxon>Xenopodinae</taxon>
        <taxon>Xenopus</taxon>
        <taxon>Silurana</taxon>
    </lineage>
</organism>
<comment type="function">
    <text evidence="2">Component of the CCR4-NOT complex which is one of the major cellular mRNA deadenylases and is linked to various cellular processes including bulk mRNA degradation, miRNA-mediated repression, translational repression during translational initiation and general transcription regulation. Additional complex functions may be a consequence of its influence on mRNA expression. Involved in down-regulation of MYB- and JUN-dependent transcription. Enhances ligand-dependent transcriptional activity of nuclear hormone receptors. May play a role in cell differentiation.</text>
</comment>
<comment type="subunit">
    <text>Homodimer. Component of the CCR4-NOT complex.</text>
</comment>
<comment type="subcellular location">
    <subcellularLocation>
        <location evidence="2">Nucleus</location>
    </subcellularLocation>
    <subcellularLocation>
        <location evidence="2">Cytoplasm</location>
        <location evidence="2">P-body</location>
    </subcellularLocation>
</comment>
<comment type="similarity">
    <text evidence="3">Belongs to the CNOT9 family.</text>
</comment>